<evidence type="ECO:0000250" key="1"/>
<evidence type="ECO:0000255" key="2"/>
<evidence type="ECO:0000255" key="3">
    <source>
        <dbReference type="PROSITE-ProRule" id="PRU01210"/>
    </source>
</evidence>
<evidence type="ECO:0000305" key="4"/>
<organism>
    <name type="scientific">Lychas mucronatus</name>
    <name type="common">Chinese swimming scorpion</name>
    <dbReference type="NCBI Taxonomy" id="172552"/>
    <lineage>
        <taxon>Eukaryota</taxon>
        <taxon>Metazoa</taxon>
        <taxon>Ecdysozoa</taxon>
        <taxon>Arthropoda</taxon>
        <taxon>Chelicerata</taxon>
        <taxon>Arachnida</taxon>
        <taxon>Scorpiones</taxon>
        <taxon>Buthida</taxon>
        <taxon>Buthoidea</taxon>
        <taxon>Buthidae</taxon>
        <taxon>Lychas</taxon>
    </lineage>
</organism>
<reference key="1">
    <citation type="journal article" date="2010" name="BMC Genomics">
        <title>Comparative venom gland transcriptome analysis of the scorpion Lychas mucronatus reveals intraspecific toxic gene diversity and new venomous components.</title>
        <authorList>
            <person name="Zhao R."/>
            <person name="Ma Y."/>
            <person name="He Y."/>
            <person name="Di Z."/>
            <person name="Wu Y.-L."/>
            <person name="Cao Z.-J."/>
            <person name="Li W.-X."/>
        </authorList>
    </citation>
    <scope>NUCLEOTIDE SEQUENCE [MRNA]</scope>
    <source>
        <strain>Yunnan</strain>
        <tissue>Venom gland</tissue>
    </source>
</reference>
<protein>
    <recommendedName>
        <fullName>Neurotoxin LmNaTx34.1</fullName>
    </recommendedName>
</protein>
<keyword id="KW-1015">Disulfide bond</keyword>
<keyword id="KW-0872">Ion channel impairing toxin</keyword>
<keyword id="KW-0528">Neurotoxin</keyword>
<keyword id="KW-0964">Secreted</keyword>
<keyword id="KW-0732">Signal</keyword>
<keyword id="KW-0800">Toxin</keyword>
<keyword id="KW-0738">Voltage-gated sodium channel impairing toxin</keyword>
<accession>P0CI81</accession>
<proteinExistence type="evidence at transcript level"/>
<name>SNAY1_LYCMC</name>
<dbReference type="EMBL" id="GT028829">
    <property type="status" value="NOT_ANNOTATED_CDS"/>
    <property type="molecule type" value="mRNA"/>
</dbReference>
<dbReference type="SMR" id="P0CI81"/>
<dbReference type="GO" id="GO:0005576">
    <property type="term" value="C:extracellular region"/>
    <property type="evidence" value="ECO:0007669"/>
    <property type="project" value="UniProtKB-SubCell"/>
</dbReference>
<dbReference type="GO" id="GO:0019871">
    <property type="term" value="F:sodium channel inhibitor activity"/>
    <property type="evidence" value="ECO:0007669"/>
    <property type="project" value="InterPro"/>
</dbReference>
<dbReference type="GO" id="GO:0090729">
    <property type="term" value="F:toxin activity"/>
    <property type="evidence" value="ECO:0007669"/>
    <property type="project" value="UniProtKB-KW"/>
</dbReference>
<dbReference type="GO" id="GO:0006952">
    <property type="term" value="P:defense response"/>
    <property type="evidence" value="ECO:0007669"/>
    <property type="project" value="InterPro"/>
</dbReference>
<dbReference type="CDD" id="cd23106">
    <property type="entry name" value="neurotoxins_LC_scorpion"/>
    <property type="match status" value="1"/>
</dbReference>
<dbReference type="Gene3D" id="3.30.30.10">
    <property type="entry name" value="Knottin, scorpion toxin-like"/>
    <property type="match status" value="1"/>
</dbReference>
<dbReference type="InterPro" id="IPR044062">
    <property type="entry name" value="LCN-type_CS_alpha_beta_dom"/>
</dbReference>
<dbReference type="InterPro" id="IPR003614">
    <property type="entry name" value="Scorpion_toxin-like"/>
</dbReference>
<dbReference type="InterPro" id="IPR036574">
    <property type="entry name" value="Scorpion_toxin-like_sf"/>
</dbReference>
<dbReference type="InterPro" id="IPR018218">
    <property type="entry name" value="Scorpion_toxinL"/>
</dbReference>
<dbReference type="InterPro" id="IPR002061">
    <property type="entry name" value="Scorpion_toxinL/defensin"/>
</dbReference>
<dbReference type="Pfam" id="PF00537">
    <property type="entry name" value="Toxin_3"/>
    <property type="match status" value="1"/>
</dbReference>
<dbReference type="PRINTS" id="PR00285">
    <property type="entry name" value="SCORPNTOXIN"/>
</dbReference>
<dbReference type="SMART" id="SM00505">
    <property type="entry name" value="Knot1"/>
    <property type="match status" value="1"/>
</dbReference>
<dbReference type="SUPFAM" id="SSF57095">
    <property type="entry name" value="Scorpion toxin-like"/>
    <property type="match status" value="1"/>
</dbReference>
<dbReference type="PROSITE" id="PS51863">
    <property type="entry name" value="LCN_CSAB"/>
    <property type="match status" value="1"/>
</dbReference>
<comment type="function">
    <text evidence="1">Binds voltage-independently at site-4 of sodium channels (Nav) and shift the voltage of activation toward more negative potentials thereby affecting sodium channel activation and promoting spontaneous and repetitive firing.</text>
</comment>
<comment type="subcellular location">
    <subcellularLocation>
        <location evidence="1">Secreted</location>
    </subcellularLocation>
</comment>
<comment type="tissue specificity">
    <text>Expressed by the venom gland.</text>
</comment>
<comment type="domain">
    <text evidence="4">Has the structural arrangement of an alpha-helix connected to antiparallel beta-sheets by disulfide bonds (CS-alpha/beta).</text>
</comment>
<comment type="similarity">
    <text evidence="4">Belongs to the long (4 C-C) scorpion toxin superfamily. Sodium channel inhibitor family. Beta subfamily.</text>
</comment>
<sequence length="86" mass="9776">MKTVILVVIALMVIEVQGDGYLMVRAGIEKGCKIWCVINNDYCNRDCKLKGGTYGYCYFWKLACYCEGLPESSPDIWTYEKNTCSP</sequence>
<feature type="signal peptide" evidence="2">
    <location>
        <begin position="1"/>
        <end position="18"/>
    </location>
</feature>
<feature type="chain" id="PRO_0000403822" description="Neurotoxin LmNaTx34.1">
    <location>
        <begin position="19"/>
        <end position="86"/>
    </location>
</feature>
<feature type="domain" description="LCN-type CS-alpha/beta" evidence="3">
    <location>
        <begin position="19"/>
        <end position="85"/>
    </location>
</feature>
<feature type="disulfide bond" evidence="3">
    <location>
        <begin position="32"/>
        <end position="84"/>
    </location>
</feature>
<feature type="disulfide bond" evidence="3">
    <location>
        <begin position="36"/>
        <end position="57"/>
    </location>
</feature>
<feature type="disulfide bond" evidence="3">
    <location>
        <begin position="43"/>
        <end position="64"/>
    </location>
</feature>
<feature type="disulfide bond" evidence="3">
    <location>
        <begin position="47"/>
        <end position="66"/>
    </location>
</feature>